<organism>
    <name type="scientific">Xenopus tropicalis</name>
    <name type="common">Western clawed frog</name>
    <name type="synonym">Silurana tropicalis</name>
    <dbReference type="NCBI Taxonomy" id="8364"/>
    <lineage>
        <taxon>Eukaryota</taxon>
        <taxon>Metazoa</taxon>
        <taxon>Chordata</taxon>
        <taxon>Craniata</taxon>
        <taxon>Vertebrata</taxon>
        <taxon>Euteleostomi</taxon>
        <taxon>Amphibia</taxon>
        <taxon>Batrachia</taxon>
        <taxon>Anura</taxon>
        <taxon>Pipoidea</taxon>
        <taxon>Pipidae</taxon>
        <taxon>Xenopodinae</taxon>
        <taxon>Xenopus</taxon>
        <taxon>Silurana</taxon>
    </lineage>
</organism>
<feature type="chain" id="PRO_0000395453" description="Transcription factor Sp9">
    <location>
        <begin position="1"/>
        <end position="422"/>
    </location>
</feature>
<feature type="zinc finger region" description="C2H2-type 1" evidence="3">
    <location>
        <begin position="295"/>
        <end position="319"/>
    </location>
</feature>
<feature type="zinc finger region" description="C2H2-type 2" evidence="3">
    <location>
        <begin position="325"/>
        <end position="349"/>
    </location>
</feature>
<feature type="zinc finger region" description="C2H2-type 3" evidence="3">
    <location>
        <begin position="355"/>
        <end position="377"/>
    </location>
</feature>
<feature type="region of interest" description="Disordered" evidence="4">
    <location>
        <begin position="372"/>
        <end position="422"/>
    </location>
</feature>
<feature type="short sequence motif" description="9aaTAD; inactive" evidence="2">
    <location>
        <begin position="163"/>
        <end position="171"/>
    </location>
</feature>
<feature type="compositionally biased region" description="Basic and acidic residues" evidence="4">
    <location>
        <begin position="413"/>
        <end position="422"/>
    </location>
</feature>
<gene>
    <name type="primary">sp9</name>
</gene>
<accession>Q0VA40</accession>
<evidence type="ECO:0000250" key="1"/>
<evidence type="ECO:0000250" key="2">
    <source>
        <dbReference type="UniProtKB" id="P0CG40"/>
    </source>
</evidence>
<evidence type="ECO:0000255" key="3">
    <source>
        <dbReference type="PROSITE-ProRule" id="PRU00042"/>
    </source>
</evidence>
<evidence type="ECO:0000256" key="4">
    <source>
        <dbReference type="SAM" id="MobiDB-lite"/>
    </source>
</evidence>
<evidence type="ECO:0000305" key="5"/>
<comment type="function">
    <text evidence="1">Transcription factor which plays a key role in limb development. Positively regulates FGF8 expression in the apical ectodermal ridge (AER) and contributes to limb outgrowth in embryos (By similarity).</text>
</comment>
<comment type="subcellular location">
    <subcellularLocation>
        <location evidence="5">Nucleus</location>
    </subcellularLocation>
</comment>
<comment type="domain">
    <text evidence="2">The 9aaTAD motif is a transactivation domain present in a large number of yeast and animal transcription factors. In SP9, the motif is inactive.</text>
</comment>
<comment type="similarity">
    <text evidence="5">Belongs to the Sp1 C2H2-type zinc-finger protein family.</text>
</comment>
<keyword id="KW-0238">DNA-binding</keyword>
<keyword id="KW-0479">Metal-binding</keyword>
<keyword id="KW-0539">Nucleus</keyword>
<keyword id="KW-1185">Reference proteome</keyword>
<keyword id="KW-0677">Repeat</keyword>
<keyword id="KW-0804">Transcription</keyword>
<keyword id="KW-0805">Transcription regulation</keyword>
<keyword id="KW-0862">Zinc</keyword>
<keyword id="KW-0863">Zinc-finger</keyword>
<name>SP9_XENTR</name>
<proteinExistence type="evidence at transcript level"/>
<protein>
    <recommendedName>
        <fullName>Transcription factor Sp9</fullName>
    </recommendedName>
</protein>
<reference key="1">
    <citation type="submission" date="2006-08" db="EMBL/GenBank/DDBJ databases">
        <authorList>
            <consortium name="NIH - Xenopus Gene Collection (XGC) project"/>
        </authorList>
    </citation>
    <scope>NUCLEOTIDE SEQUENCE [LARGE SCALE MRNA]</scope>
    <source>
        <tissue>Brain</tissue>
    </source>
</reference>
<dbReference type="EMBL" id="BC121268">
    <property type="protein sequence ID" value="AAI21269.1"/>
    <property type="molecule type" value="mRNA"/>
</dbReference>
<dbReference type="RefSeq" id="NP_001072269.1">
    <property type="nucleotide sequence ID" value="NM_001078801.1"/>
</dbReference>
<dbReference type="SMR" id="Q0VA40"/>
<dbReference type="FunCoup" id="Q0VA40">
    <property type="interactions" value="194"/>
</dbReference>
<dbReference type="PaxDb" id="8364-ENSXETP00000062650"/>
<dbReference type="DNASU" id="779722"/>
<dbReference type="GeneID" id="779722"/>
<dbReference type="KEGG" id="xtr:779722"/>
<dbReference type="AGR" id="Xenbase:XB-GENE-5931012"/>
<dbReference type="CTD" id="100131390"/>
<dbReference type="Xenbase" id="XB-GENE-5931012">
    <property type="gene designation" value="sp9"/>
</dbReference>
<dbReference type="eggNOG" id="KOG1721">
    <property type="taxonomic scope" value="Eukaryota"/>
</dbReference>
<dbReference type="HOGENOM" id="CLU_019484_4_1_1"/>
<dbReference type="InParanoid" id="Q0VA40"/>
<dbReference type="OMA" id="SASSWWD"/>
<dbReference type="OrthoDB" id="6365676at2759"/>
<dbReference type="PhylomeDB" id="Q0VA40"/>
<dbReference type="TreeFam" id="TF350150"/>
<dbReference type="Proteomes" id="UP000008143">
    <property type="component" value="Chromosome 9"/>
</dbReference>
<dbReference type="Bgee" id="ENSXETG00000030987">
    <property type="expression patterns" value="Expressed in brain and 4 other cell types or tissues"/>
</dbReference>
<dbReference type="GO" id="GO:0005634">
    <property type="term" value="C:nucleus"/>
    <property type="evidence" value="ECO:0007669"/>
    <property type="project" value="UniProtKB-SubCell"/>
</dbReference>
<dbReference type="GO" id="GO:0003677">
    <property type="term" value="F:DNA binding"/>
    <property type="evidence" value="ECO:0007669"/>
    <property type="project" value="UniProtKB-KW"/>
</dbReference>
<dbReference type="GO" id="GO:0008270">
    <property type="term" value="F:zinc ion binding"/>
    <property type="evidence" value="ECO:0007669"/>
    <property type="project" value="UniProtKB-KW"/>
</dbReference>
<dbReference type="GO" id="GO:0030326">
    <property type="term" value="P:embryonic limb morphogenesis"/>
    <property type="evidence" value="ECO:0007669"/>
    <property type="project" value="Ensembl"/>
</dbReference>
<dbReference type="GO" id="GO:0035118">
    <property type="term" value="P:embryonic pectoral fin morphogenesis"/>
    <property type="evidence" value="ECO:0007669"/>
    <property type="project" value="Ensembl"/>
</dbReference>
<dbReference type="GO" id="GO:0045743">
    <property type="term" value="P:positive regulation of fibroblast growth factor receptor signaling pathway"/>
    <property type="evidence" value="ECO:0007669"/>
    <property type="project" value="Ensembl"/>
</dbReference>
<dbReference type="CDD" id="cd22549">
    <property type="entry name" value="SP9_N"/>
    <property type="match status" value="1"/>
</dbReference>
<dbReference type="FunFam" id="3.30.160.60:FF:000077">
    <property type="entry name" value="Sp8 transcription factor"/>
    <property type="match status" value="1"/>
</dbReference>
<dbReference type="FunFam" id="3.30.160.60:FF:000014">
    <property type="entry name" value="Transcription factor Sp3"/>
    <property type="match status" value="1"/>
</dbReference>
<dbReference type="FunFam" id="3.30.160.60:FF:000026">
    <property type="entry name" value="Transcription factor Sp3"/>
    <property type="match status" value="1"/>
</dbReference>
<dbReference type="Gene3D" id="3.30.160.60">
    <property type="entry name" value="Classic Zinc Finger"/>
    <property type="match status" value="3"/>
</dbReference>
<dbReference type="InterPro" id="IPR036236">
    <property type="entry name" value="Znf_C2H2_sf"/>
</dbReference>
<dbReference type="InterPro" id="IPR013087">
    <property type="entry name" value="Znf_C2H2_type"/>
</dbReference>
<dbReference type="PANTHER" id="PTHR23235">
    <property type="entry name" value="KRUEPPEL-LIKE TRANSCRIPTION FACTOR"/>
    <property type="match status" value="1"/>
</dbReference>
<dbReference type="PANTHER" id="PTHR23235:SF26">
    <property type="entry name" value="TRANSCRIPTION FACTOR SP9"/>
    <property type="match status" value="1"/>
</dbReference>
<dbReference type="Pfam" id="PF00096">
    <property type="entry name" value="zf-C2H2"/>
    <property type="match status" value="3"/>
</dbReference>
<dbReference type="SMART" id="SM00355">
    <property type="entry name" value="ZnF_C2H2"/>
    <property type="match status" value="3"/>
</dbReference>
<dbReference type="SUPFAM" id="SSF57667">
    <property type="entry name" value="beta-beta-alpha zinc fingers"/>
    <property type="match status" value="2"/>
</dbReference>
<dbReference type="PROSITE" id="PS00028">
    <property type="entry name" value="ZINC_FINGER_C2H2_1"/>
    <property type="match status" value="3"/>
</dbReference>
<dbReference type="PROSITE" id="PS50157">
    <property type="entry name" value="ZINC_FINGER_C2H2_2"/>
    <property type="match status" value="3"/>
</dbReference>
<sequence length="422" mass="43913">MATSILGEEPRFGTTPLAMLAATCNKIGNTSPLSSLPESSAFAKGGFHPWKRSSSSCSLGSSLGGFAVATSRASGALTGGTATANSAFCLASTSPTSSAFSSDYSGLFSSASGVSPQESAGQSAFISKVHASAEGLYPRVGMAHPYESWYKSGFHSDVSGGASAWWDVHAAGPSTWLEVQNTQGALHSGAAAHGQLGAYSPDFSSLTHSAFSSTGASHLLPGGQHLLTQDAFKPVLPSYPDSGGPMLSGAAGTGAGGTGRSARRYSGRATCDCPNCQEAERLGPAGASLRRKGLHSCHIPGCGKVYGKTSHLKAHLRWHTGERPFVCNWLFCGKRFTRSDELQRHLRTHTGEKRFACPVCNKRFMRSDHLSKHIKTHNGGGGGGKKGSDSDTDASNLETPRSESPELIMEGVRPGKDSGNDS</sequence>